<accession>Q8TPD6</accession>
<organism>
    <name type="scientific">Methanosarcina acetivorans (strain ATCC 35395 / DSM 2834 / JCM 12185 / C2A)</name>
    <dbReference type="NCBI Taxonomy" id="188937"/>
    <lineage>
        <taxon>Archaea</taxon>
        <taxon>Methanobacteriati</taxon>
        <taxon>Methanobacteriota</taxon>
        <taxon>Stenosarchaea group</taxon>
        <taxon>Methanomicrobia</taxon>
        <taxon>Methanosarcinales</taxon>
        <taxon>Methanosarcinaceae</taxon>
        <taxon>Methanosarcina</taxon>
    </lineage>
</organism>
<feature type="chain" id="PRO_0000134927" description="Probable molybdenum cofactor guanylyltransferase">
    <location>
        <begin position="1"/>
        <end position="225"/>
    </location>
</feature>
<feature type="binding site" evidence="1">
    <location>
        <begin position="20"/>
        <end position="22"/>
    </location>
    <ligand>
        <name>GTP</name>
        <dbReference type="ChEBI" id="CHEBI:37565"/>
    </ligand>
</feature>
<feature type="binding site" evidence="1">
    <location>
        <position position="33"/>
    </location>
    <ligand>
        <name>GTP</name>
        <dbReference type="ChEBI" id="CHEBI:37565"/>
    </ligand>
</feature>
<feature type="binding site" evidence="1">
    <location>
        <position position="88"/>
    </location>
    <ligand>
        <name>GTP</name>
        <dbReference type="ChEBI" id="CHEBI:37565"/>
    </ligand>
</feature>
<feature type="binding site" evidence="1">
    <location>
        <position position="117"/>
    </location>
    <ligand>
        <name>GTP</name>
        <dbReference type="ChEBI" id="CHEBI:37565"/>
    </ligand>
</feature>
<feature type="binding site" evidence="1">
    <location>
        <position position="117"/>
    </location>
    <ligand>
        <name>Mg(2+)</name>
        <dbReference type="ChEBI" id="CHEBI:18420"/>
    </ligand>
</feature>
<comment type="function">
    <text evidence="1">Transfers a GMP moiety from GTP to Mo-molybdopterin (Mo-MPT) cofactor (Moco or molybdenum cofactor) to form Mo-molybdopterin guanine dinucleotide (Mo-MGD) cofactor.</text>
</comment>
<comment type="catalytic activity">
    <reaction evidence="1">
        <text>Mo-molybdopterin + GTP + H(+) = Mo-molybdopterin guanine dinucleotide + diphosphate</text>
        <dbReference type="Rhea" id="RHEA:34243"/>
        <dbReference type="ChEBI" id="CHEBI:15378"/>
        <dbReference type="ChEBI" id="CHEBI:33019"/>
        <dbReference type="ChEBI" id="CHEBI:37565"/>
        <dbReference type="ChEBI" id="CHEBI:71302"/>
        <dbReference type="ChEBI" id="CHEBI:71310"/>
        <dbReference type="EC" id="2.7.7.77"/>
    </reaction>
</comment>
<comment type="cofactor">
    <cofactor evidence="1">
        <name>Mg(2+)</name>
        <dbReference type="ChEBI" id="CHEBI:18420"/>
    </cofactor>
</comment>
<comment type="subcellular location">
    <subcellularLocation>
        <location evidence="1">Cytoplasm</location>
    </subcellularLocation>
</comment>
<comment type="domain">
    <text evidence="1">The N-terminal domain determines nucleotide recognition and specific binding, while the C-terminal domain determines the specific binding to the target protein.</text>
</comment>
<comment type="similarity">
    <text evidence="1">Belongs to the MobA family.</text>
</comment>
<protein>
    <recommendedName>
        <fullName evidence="1">Probable molybdenum cofactor guanylyltransferase</fullName>
        <shortName evidence="1">MoCo guanylyltransferase</shortName>
        <ecNumber evidence="1">2.7.7.77</ecNumber>
    </recommendedName>
    <alternativeName>
        <fullName evidence="1">GTP:molybdopterin guanylyltransferase</fullName>
    </alternativeName>
    <alternativeName>
        <fullName evidence="1">Mo-MPT guanylyltransferase</fullName>
    </alternativeName>
    <alternativeName>
        <fullName evidence="1">Molybdopterin guanylyltransferase</fullName>
    </alternativeName>
    <alternativeName>
        <fullName evidence="1">Molybdopterin-guanine dinucleotide synthase</fullName>
        <shortName evidence="1">MGD synthase</shortName>
    </alternativeName>
</protein>
<name>MOBA_METAC</name>
<dbReference type="EC" id="2.7.7.77" evidence="1"/>
<dbReference type="EMBL" id="AE010299">
    <property type="protein sequence ID" value="AAM05380.1"/>
    <property type="molecule type" value="Genomic_DNA"/>
</dbReference>
<dbReference type="RefSeq" id="WP_011021972.1">
    <property type="nucleotide sequence ID" value="NC_003552.1"/>
</dbReference>
<dbReference type="SMR" id="Q8TPD6"/>
<dbReference type="FunCoup" id="Q8TPD6">
    <property type="interactions" value="1"/>
</dbReference>
<dbReference type="STRING" id="188937.MA_1977"/>
<dbReference type="EnsemblBacteria" id="AAM05380">
    <property type="protein sequence ID" value="AAM05380"/>
    <property type="gene ID" value="MA_1977"/>
</dbReference>
<dbReference type="GeneID" id="1473866"/>
<dbReference type="KEGG" id="mac:MA_1977"/>
<dbReference type="HOGENOM" id="CLU_055597_2_1_2"/>
<dbReference type="InParanoid" id="Q8TPD6"/>
<dbReference type="OrthoDB" id="28434at2157"/>
<dbReference type="PhylomeDB" id="Q8TPD6"/>
<dbReference type="Proteomes" id="UP000002487">
    <property type="component" value="Chromosome"/>
</dbReference>
<dbReference type="GO" id="GO:0005737">
    <property type="term" value="C:cytoplasm"/>
    <property type="evidence" value="ECO:0007669"/>
    <property type="project" value="UniProtKB-SubCell"/>
</dbReference>
<dbReference type="GO" id="GO:0005525">
    <property type="term" value="F:GTP binding"/>
    <property type="evidence" value="ECO:0007669"/>
    <property type="project" value="UniProtKB-UniRule"/>
</dbReference>
<dbReference type="GO" id="GO:0046872">
    <property type="term" value="F:metal ion binding"/>
    <property type="evidence" value="ECO:0007669"/>
    <property type="project" value="UniProtKB-KW"/>
</dbReference>
<dbReference type="GO" id="GO:0061603">
    <property type="term" value="F:molybdenum cofactor guanylyltransferase activity"/>
    <property type="evidence" value="ECO:0007669"/>
    <property type="project" value="UniProtKB-EC"/>
</dbReference>
<dbReference type="GO" id="GO:0016779">
    <property type="term" value="F:nucleotidyltransferase activity"/>
    <property type="evidence" value="ECO:0000318"/>
    <property type="project" value="GO_Central"/>
</dbReference>
<dbReference type="GO" id="GO:0006777">
    <property type="term" value="P:Mo-molybdopterin cofactor biosynthetic process"/>
    <property type="evidence" value="ECO:0007669"/>
    <property type="project" value="UniProtKB-KW"/>
</dbReference>
<dbReference type="CDD" id="cd02503">
    <property type="entry name" value="MobA"/>
    <property type="match status" value="1"/>
</dbReference>
<dbReference type="Gene3D" id="3.90.550.10">
    <property type="entry name" value="Spore Coat Polysaccharide Biosynthesis Protein SpsA, Chain A"/>
    <property type="match status" value="1"/>
</dbReference>
<dbReference type="HAMAP" id="MF_00316">
    <property type="entry name" value="MobA"/>
    <property type="match status" value="1"/>
</dbReference>
<dbReference type="InterPro" id="IPR025877">
    <property type="entry name" value="MobA-like_NTP_Trfase"/>
</dbReference>
<dbReference type="InterPro" id="IPR013482">
    <property type="entry name" value="Molybde_CF_guanTrfase"/>
</dbReference>
<dbReference type="InterPro" id="IPR029044">
    <property type="entry name" value="Nucleotide-diphossugar_trans"/>
</dbReference>
<dbReference type="PANTHER" id="PTHR19136">
    <property type="entry name" value="MOLYBDENUM COFACTOR GUANYLYLTRANSFERASE"/>
    <property type="match status" value="1"/>
</dbReference>
<dbReference type="PANTHER" id="PTHR19136:SF81">
    <property type="entry name" value="MOLYBDENUM COFACTOR GUANYLYLTRANSFERASE"/>
    <property type="match status" value="1"/>
</dbReference>
<dbReference type="Pfam" id="PF12804">
    <property type="entry name" value="NTP_transf_3"/>
    <property type="match status" value="1"/>
</dbReference>
<dbReference type="SUPFAM" id="SSF53448">
    <property type="entry name" value="Nucleotide-diphospho-sugar transferases"/>
    <property type="match status" value="1"/>
</dbReference>
<gene>
    <name evidence="1" type="primary">mobA</name>
    <name type="ordered locus">MA_1977</name>
</gene>
<proteinExistence type="inferred from homology"/>
<reference key="1">
    <citation type="journal article" date="2002" name="Genome Res.">
        <title>The genome of Methanosarcina acetivorans reveals extensive metabolic and physiological diversity.</title>
        <authorList>
            <person name="Galagan J.E."/>
            <person name="Nusbaum C."/>
            <person name="Roy A."/>
            <person name="Endrizzi M.G."/>
            <person name="Macdonald P."/>
            <person name="FitzHugh W."/>
            <person name="Calvo S."/>
            <person name="Engels R."/>
            <person name="Smirnov S."/>
            <person name="Atnoor D."/>
            <person name="Brown A."/>
            <person name="Allen N."/>
            <person name="Naylor J."/>
            <person name="Stange-Thomann N."/>
            <person name="DeArellano K."/>
            <person name="Johnson R."/>
            <person name="Linton L."/>
            <person name="McEwan P."/>
            <person name="McKernan K."/>
            <person name="Talamas J."/>
            <person name="Tirrell A."/>
            <person name="Ye W."/>
            <person name="Zimmer A."/>
            <person name="Barber R.D."/>
            <person name="Cann I."/>
            <person name="Graham D.E."/>
            <person name="Grahame D.A."/>
            <person name="Guss A.M."/>
            <person name="Hedderich R."/>
            <person name="Ingram-Smith C."/>
            <person name="Kuettner H.C."/>
            <person name="Krzycki J.A."/>
            <person name="Leigh J.A."/>
            <person name="Li W."/>
            <person name="Liu J."/>
            <person name="Mukhopadhyay B."/>
            <person name="Reeve J.N."/>
            <person name="Smith K."/>
            <person name="Springer T.A."/>
            <person name="Umayam L.A."/>
            <person name="White O."/>
            <person name="White R.H."/>
            <person name="de Macario E.C."/>
            <person name="Ferry J.G."/>
            <person name="Jarrell K.F."/>
            <person name="Jing H."/>
            <person name="Macario A.J.L."/>
            <person name="Paulsen I.T."/>
            <person name="Pritchett M."/>
            <person name="Sowers K.R."/>
            <person name="Swanson R.V."/>
            <person name="Zinder S.H."/>
            <person name="Lander E."/>
            <person name="Metcalf W.W."/>
            <person name="Birren B."/>
        </authorList>
    </citation>
    <scope>NUCLEOTIDE SEQUENCE [LARGE SCALE GENOMIC DNA]</scope>
    <source>
        <strain>ATCC 35395 / DSM 2834 / JCM 12185 / C2A</strain>
    </source>
</reference>
<evidence type="ECO:0000255" key="1">
    <source>
        <dbReference type="HAMAP-Rule" id="MF_00316"/>
    </source>
</evidence>
<keyword id="KW-0963">Cytoplasm</keyword>
<keyword id="KW-0342">GTP-binding</keyword>
<keyword id="KW-0460">Magnesium</keyword>
<keyword id="KW-0479">Metal-binding</keyword>
<keyword id="KW-0501">Molybdenum cofactor biosynthesis</keyword>
<keyword id="KW-0547">Nucleotide-binding</keyword>
<keyword id="KW-1185">Reference proteome</keyword>
<keyword id="KW-0808">Transferase</keyword>
<sequence length="225" mass="25494">MSGKTELKPGRTKSRSAIVLAGGRGRRMGMVEKALLEFEGKTILERLLENLFRVVDEVILSVRDIPQKEKLLPVLEKFPDREIRFCFDSREDAGPLEGIRAGLLESRSEYSFVCAGDMPFVNSEIVDLLFEKANGHDAALPRWEEDRMYEPLHAVYSRKMLLEIEKTFEGERNSVLTPVFAMKDVVFVEVSEIRGIDPELRTFANINTVEDIESMIGSVVGKVEL</sequence>